<reference key="1">
    <citation type="journal article" date="2007" name="J. Bacteriol.">
        <title>The complete genome sequence of Bacillus thuringiensis Al Hakam.</title>
        <authorList>
            <person name="Challacombe J.F."/>
            <person name="Altherr M.R."/>
            <person name="Xie G."/>
            <person name="Bhotika S.S."/>
            <person name="Brown N."/>
            <person name="Bruce D."/>
            <person name="Campbell C.S."/>
            <person name="Campbell M.L."/>
            <person name="Chen J."/>
            <person name="Chertkov O."/>
            <person name="Cleland C."/>
            <person name="Dimitrijevic M."/>
            <person name="Doggett N.A."/>
            <person name="Fawcett J.J."/>
            <person name="Glavina T."/>
            <person name="Goodwin L.A."/>
            <person name="Green L.D."/>
            <person name="Han C.S."/>
            <person name="Hill K.K."/>
            <person name="Hitchcock P."/>
            <person name="Jackson P.J."/>
            <person name="Keim P."/>
            <person name="Kewalramani A.R."/>
            <person name="Longmire J."/>
            <person name="Lucas S."/>
            <person name="Malfatti S."/>
            <person name="Martinez D."/>
            <person name="McMurry K."/>
            <person name="Meincke L.J."/>
            <person name="Misra M."/>
            <person name="Moseman B.L."/>
            <person name="Mundt M."/>
            <person name="Munk A.C."/>
            <person name="Okinaka R.T."/>
            <person name="Parson-Quintana B."/>
            <person name="Reilly L.P."/>
            <person name="Richardson P."/>
            <person name="Robinson D.L."/>
            <person name="Saunders E."/>
            <person name="Tapia R."/>
            <person name="Tesmer J.G."/>
            <person name="Thayer N."/>
            <person name="Thompson L.S."/>
            <person name="Tice H."/>
            <person name="Ticknor L.O."/>
            <person name="Wills P.L."/>
            <person name="Gilna P."/>
            <person name="Brettin T.S."/>
        </authorList>
    </citation>
    <scope>NUCLEOTIDE SEQUENCE [LARGE SCALE GENOMIC DNA]</scope>
    <source>
        <strain>Al Hakam</strain>
    </source>
</reference>
<accession>A0RIR7</accession>
<feature type="chain" id="PRO_0000316636" description="Putative pyruvate, phosphate dikinase regulatory protein">
    <location>
        <begin position="1"/>
        <end position="270"/>
    </location>
</feature>
<feature type="binding site" evidence="1">
    <location>
        <begin position="148"/>
        <end position="155"/>
    </location>
    <ligand>
        <name>ADP</name>
        <dbReference type="ChEBI" id="CHEBI:456216"/>
    </ligand>
</feature>
<dbReference type="EC" id="2.7.11.32" evidence="1"/>
<dbReference type="EC" id="2.7.4.27" evidence="1"/>
<dbReference type="EMBL" id="CP000485">
    <property type="protein sequence ID" value="ABK87110.1"/>
    <property type="molecule type" value="Genomic_DNA"/>
</dbReference>
<dbReference type="RefSeq" id="WP_000368943.1">
    <property type="nucleotide sequence ID" value="NC_008600.1"/>
</dbReference>
<dbReference type="SMR" id="A0RIR7"/>
<dbReference type="KEGG" id="btl:BALH_3887"/>
<dbReference type="HOGENOM" id="CLU_046206_2_1_9"/>
<dbReference type="GO" id="GO:0043531">
    <property type="term" value="F:ADP binding"/>
    <property type="evidence" value="ECO:0007669"/>
    <property type="project" value="UniProtKB-UniRule"/>
</dbReference>
<dbReference type="GO" id="GO:0005524">
    <property type="term" value="F:ATP binding"/>
    <property type="evidence" value="ECO:0007669"/>
    <property type="project" value="InterPro"/>
</dbReference>
<dbReference type="GO" id="GO:0016776">
    <property type="term" value="F:phosphotransferase activity, phosphate group as acceptor"/>
    <property type="evidence" value="ECO:0007669"/>
    <property type="project" value="UniProtKB-UniRule"/>
</dbReference>
<dbReference type="GO" id="GO:0004674">
    <property type="term" value="F:protein serine/threonine kinase activity"/>
    <property type="evidence" value="ECO:0007669"/>
    <property type="project" value="UniProtKB-UniRule"/>
</dbReference>
<dbReference type="HAMAP" id="MF_00921">
    <property type="entry name" value="PDRP"/>
    <property type="match status" value="1"/>
</dbReference>
<dbReference type="InterPro" id="IPR005177">
    <property type="entry name" value="Kinase-pyrophosphorylase"/>
</dbReference>
<dbReference type="InterPro" id="IPR026565">
    <property type="entry name" value="PPDK_reg"/>
</dbReference>
<dbReference type="NCBIfam" id="NF003742">
    <property type="entry name" value="PRK05339.1"/>
    <property type="match status" value="1"/>
</dbReference>
<dbReference type="PANTHER" id="PTHR31756">
    <property type="entry name" value="PYRUVATE, PHOSPHATE DIKINASE REGULATORY PROTEIN 1, CHLOROPLASTIC"/>
    <property type="match status" value="1"/>
</dbReference>
<dbReference type="PANTHER" id="PTHR31756:SF3">
    <property type="entry name" value="PYRUVATE, PHOSPHATE DIKINASE REGULATORY PROTEIN 1, CHLOROPLASTIC"/>
    <property type="match status" value="1"/>
</dbReference>
<dbReference type="Pfam" id="PF03618">
    <property type="entry name" value="Kinase-PPPase"/>
    <property type="match status" value="1"/>
</dbReference>
<sequence length="270" mass="30334">MDNKIVYVVSDSVGETADLVVRAAMGQFPFAPDIRRVPYVEDTGTLKEVISIAKSNQALICFTLVKPDMRQYLVTEAAKEGVEAYDIIGPLIDQIEEITGQVPRYEPGVVRRLDEEYFKKIEAIEFAVKYDDGRDARGILKADIVLIGISRTSKTPLSQYLAHNKRLKVANVPLVPEVDPPEELYQVAKEKCFGLKITPEKLNHIRKERLKSLGLSDGATYANINRIKEEIDHFENVVSKINCQVIDVSNKAIEETANIIVNAVQNQKMF</sequence>
<proteinExistence type="inferred from homology"/>
<evidence type="ECO:0000255" key="1">
    <source>
        <dbReference type="HAMAP-Rule" id="MF_00921"/>
    </source>
</evidence>
<organism>
    <name type="scientific">Bacillus thuringiensis (strain Al Hakam)</name>
    <dbReference type="NCBI Taxonomy" id="412694"/>
    <lineage>
        <taxon>Bacteria</taxon>
        <taxon>Bacillati</taxon>
        <taxon>Bacillota</taxon>
        <taxon>Bacilli</taxon>
        <taxon>Bacillales</taxon>
        <taxon>Bacillaceae</taxon>
        <taxon>Bacillus</taxon>
        <taxon>Bacillus cereus group</taxon>
    </lineage>
</organism>
<keyword id="KW-0418">Kinase</keyword>
<keyword id="KW-0547">Nucleotide-binding</keyword>
<keyword id="KW-0723">Serine/threonine-protein kinase</keyword>
<keyword id="KW-0808">Transferase</keyword>
<gene>
    <name type="ordered locus">BALH_3887</name>
</gene>
<protein>
    <recommendedName>
        <fullName evidence="1">Putative pyruvate, phosphate dikinase regulatory protein</fullName>
        <shortName evidence="1">PPDK regulatory protein</shortName>
        <ecNumber evidence="1">2.7.11.32</ecNumber>
        <ecNumber evidence="1">2.7.4.27</ecNumber>
    </recommendedName>
</protein>
<comment type="function">
    <text evidence="1">Bifunctional serine/threonine kinase and phosphorylase involved in the regulation of the pyruvate, phosphate dikinase (PPDK) by catalyzing its phosphorylation/dephosphorylation.</text>
</comment>
<comment type="catalytic activity">
    <reaction evidence="1">
        <text>N(tele)-phospho-L-histidyl/L-threonyl-[pyruvate, phosphate dikinase] + ADP = N(tele)-phospho-L-histidyl/O-phospho-L-threonyl-[pyruvate, phosphate dikinase] + AMP + H(+)</text>
        <dbReference type="Rhea" id="RHEA:43692"/>
        <dbReference type="Rhea" id="RHEA-COMP:10650"/>
        <dbReference type="Rhea" id="RHEA-COMP:10651"/>
        <dbReference type="ChEBI" id="CHEBI:15378"/>
        <dbReference type="ChEBI" id="CHEBI:30013"/>
        <dbReference type="ChEBI" id="CHEBI:61977"/>
        <dbReference type="ChEBI" id="CHEBI:83586"/>
        <dbReference type="ChEBI" id="CHEBI:456215"/>
        <dbReference type="ChEBI" id="CHEBI:456216"/>
        <dbReference type="EC" id="2.7.11.32"/>
    </reaction>
</comment>
<comment type="catalytic activity">
    <reaction evidence="1">
        <text>N(tele)-phospho-L-histidyl/O-phospho-L-threonyl-[pyruvate, phosphate dikinase] + phosphate + H(+) = N(tele)-phospho-L-histidyl/L-threonyl-[pyruvate, phosphate dikinase] + diphosphate</text>
        <dbReference type="Rhea" id="RHEA:43696"/>
        <dbReference type="Rhea" id="RHEA-COMP:10650"/>
        <dbReference type="Rhea" id="RHEA-COMP:10651"/>
        <dbReference type="ChEBI" id="CHEBI:15378"/>
        <dbReference type="ChEBI" id="CHEBI:30013"/>
        <dbReference type="ChEBI" id="CHEBI:33019"/>
        <dbReference type="ChEBI" id="CHEBI:43474"/>
        <dbReference type="ChEBI" id="CHEBI:61977"/>
        <dbReference type="ChEBI" id="CHEBI:83586"/>
        <dbReference type="EC" id="2.7.4.27"/>
    </reaction>
</comment>
<comment type="similarity">
    <text evidence="1">Belongs to the pyruvate, phosphate/water dikinase regulatory protein family. PDRP subfamily.</text>
</comment>
<name>PDRP_BACAH</name>